<reference key="1">
    <citation type="journal article" date="1993" name="Proc. Natl. Acad. Sci. U.S.A.">
        <title>Fascin, an echinoid actin-bundling protein, is a homolog of the Drosophila singed gene product.</title>
        <authorList>
            <person name="Bryan J."/>
            <person name="Edwards R.H."/>
            <person name="Matsudaira P."/>
            <person name="Otto J."/>
            <person name="Wulfkuhle J."/>
        </authorList>
    </citation>
    <scope>NUCLEOTIDE SEQUENCE [MRNA]</scope>
</reference>
<reference key="2">
    <citation type="journal article" date="1978" name="J. Mol. Biol.">
        <title>Separation and interaction of the major components of sea urchin actin gel.</title>
        <authorList>
            <person name="Bryan J."/>
            <person name="Kane R.E."/>
        </authorList>
    </citation>
    <scope>CHARACTERIZATION</scope>
</reference>
<reference key="3">
    <citation type="journal article" date="1976" name="J. Cell Biol.">
        <title>Actin polymerization and interaction with other proteins in temperature-induced gelation of sea urchin egg extracts.</title>
        <authorList>
            <person name="Kane R.E."/>
        </authorList>
    </citation>
    <scope>CHARACTERIZATION</scope>
</reference>
<organism>
    <name type="scientific">Strongylocentrotus purpuratus</name>
    <name type="common">Purple sea urchin</name>
    <dbReference type="NCBI Taxonomy" id="7668"/>
    <lineage>
        <taxon>Eukaryota</taxon>
        <taxon>Metazoa</taxon>
        <taxon>Echinodermata</taxon>
        <taxon>Eleutherozoa</taxon>
        <taxon>Echinozoa</taxon>
        <taxon>Echinoidea</taxon>
        <taxon>Euechinoidea</taxon>
        <taxon>Echinacea</taxon>
        <taxon>Camarodonta</taxon>
        <taxon>Echinidea</taxon>
        <taxon>Strongylocentrotidae</taxon>
        <taxon>Strongylocentrotus</taxon>
    </lineage>
</organism>
<keyword id="KW-0009">Actin-binding</keyword>
<keyword id="KW-0963">Cytoplasm</keyword>
<keyword id="KW-0206">Cytoskeleton</keyword>
<keyword id="KW-1185">Reference proteome</keyword>
<name>FASC_STRPU</name>
<evidence type="ECO:0000250" key="1"/>
<evidence type="ECO:0000305" key="2"/>
<comment type="function">
    <text>Acts as an actin bundling protein.</text>
</comment>
<comment type="subcellular location">
    <subcellularLocation>
        <location evidence="1">Cytoplasm</location>
        <location evidence="1">Cytoskeleton</location>
    </subcellularLocation>
</comment>
<comment type="similarity">
    <text evidence="2">Belongs to the fascin family.</text>
</comment>
<proteinExistence type="evidence at protein level"/>
<sequence length="496" mass="54944">MPAMNLKYKFGLVNSAGRYLTAEKFGGKVNASGATLKARQVWILEQEESSTISYLKAPSGNFLSADKNGNVYCSVEDRTEDADTGFEIELQPDGKWALKNVSHQRYLACNGEELICSESSTSNPSANWTVQLAIHPQVCMKNVQHQRYAHLKTSEEGEDSVVVDELVPWGADSTLTLVYLGKGKYGLEAFNGKFVQTDGQLAGTANEQTQFTLIFTSGHLVLRDNNGRHLGVDSGTRVLKSSKPGLTKANYFILEDSCPQGAFEFGGKYASLKQGEDVSFKLLVDEDIEDTETFQLEFVETDKYAIRVCDPKKNSRDAKFWKTVAAGIQANGNSKDQTDCQFSVEYNGNDMHVRAPGGKYVSVRDNGHLFLQDSPKDFIFRLLNRPKLVLKCPHGFVGMKEGKAEVACNRSNFDVFTVTYKEGGYTIQDSCGKYWSCDDSSRIVLGEAAGTFFFEFHELSKFAIRAESNGMLIKGEQSGLFTANGSEVSKDTLWEF</sequence>
<feature type="initiator methionine" description="Removed">
    <location>
        <position position="1"/>
    </location>
</feature>
<feature type="chain" id="PRO_0000219385" description="Fascin">
    <location>
        <begin position="2"/>
        <end position="496"/>
    </location>
</feature>
<protein>
    <recommendedName>
        <fullName>Fascin</fullName>
    </recommendedName>
</protein>
<accession>Q05634</accession>
<dbReference type="EMBL" id="L12047">
    <property type="protein sequence ID" value="AAC37183.1"/>
    <property type="molecule type" value="mRNA"/>
</dbReference>
<dbReference type="RefSeq" id="NP_999701.1">
    <property type="nucleotide sequence ID" value="NM_214536.1"/>
</dbReference>
<dbReference type="SMR" id="Q05634"/>
<dbReference type="FunCoup" id="Q05634">
    <property type="interactions" value="58"/>
</dbReference>
<dbReference type="STRING" id="7668.Q05634"/>
<dbReference type="EnsemblMetazoa" id="NM_214536">
    <property type="protein sequence ID" value="NP_999701"/>
    <property type="gene ID" value="GeneID_373309"/>
</dbReference>
<dbReference type="GeneID" id="373309"/>
<dbReference type="KEGG" id="spu:373309"/>
<dbReference type="CTD" id="6624"/>
<dbReference type="eggNOG" id="ENOG502QPRX">
    <property type="taxonomic scope" value="Eukaryota"/>
</dbReference>
<dbReference type="HOGENOM" id="CLU_030960_2_0_1"/>
<dbReference type="InParanoid" id="Q05634"/>
<dbReference type="OMA" id="ECNKAIY"/>
<dbReference type="OrthoDB" id="10259868at2759"/>
<dbReference type="PhylomeDB" id="Q05634"/>
<dbReference type="Proteomes" id="UP000007110">
    <property type="component" value="Unassembled WGS sequence"/>
</dbReference>
<dbReference type="GO" id="GO:0015629">
    <property type="term" value="C:actin cytoskeleton"/>
    <property type="evidence" value="ECO:0000250"/>
    <property type="project" value="UniProtKB"/>
</dbReference>
<dbReference type="GO" id="GO:0005737">
    <property type="term" value="C:cytoplasm"/>
    <property type="evidence" value="ECO:0000318"/>
    <property type="project" value="GO_Central"/>
</dbReference>
<dbReference type="GO" id="GO:0003779">
    <property type="term" value="F:actin binding"/>
    <property type="evidence" value="ECO:0000250"/>
    <property type="project" value="UniProtKB"/>
</dbReference>
<dbReference type="GO" id="GO:0051015">
    <property type="term" value="F:actin filament binding"/>
    <property type="evidence" value="ECO:0000250"/>
    <property type="project" value="UniProtKB"/>
</dbReference>
<dbReference type="GO" id="GO:0030674">
    <property type="term" value="F:protein-macromolecule adaptor activity"/>
    <property type="evidence" value="ECO:0007669"/>
    <property type="project" value="InterPro"/>
</dbReference>
<dbReference type="GO" id="GO:0030036">
    <property type="term" value="P:actin cytoskeleton organization"/>
    <property type="evidence" value="ECO:0000250"/>
    <property type="project" value="UniProtKB"/>
</dbReference>
<dbReference type="GO" id="GO:0051017">
    <property type="term" value="P:actin filament bundle assembly"/>
    <property type="evidence" value="ECO:0000318"/>
    <property type="project" value="GO_Central"/>
</dbReference>
<dbReference type="GO" id="GO:0016477">
    <property type="term" value="P:cell migration"/>
    <property type="evidence" value="ECO:0000318"/>
    <property type="project" value="GO_Central"/>
</dbReference>
<dbReference type="GO" id="GO:0007163">
    <property type="term" value="P:establishment or maintenance of cell polarity"/>
    <property type="evidence" value="ECO:0000318"/>
    <property type="project" value="GO_Central"/>
</dbReference>
<dbReference type="CDD" id="cd23334">
    <property type="entry name" value="beta-trefoil_FSCN_rpt1"/>
    <property type="match status" value="1"/>
</dbReference>
<dbReference type="CDD" id="cd23335">
    <property type="entry name" value="beta-trefoil_FSCN_rpt2"/>
    <property type="match status" value="1"/>
</dbReference>
<dbReference type="CDD" id="cd23337">
    <property type="entry name" value="beta-trefoil_FSCN_rpt4"/>
    <property type="match status" value="1"/>
</dbReference>
<dbReference type="FunFam" id="2.80.10.50:FF:000008">
    <property type="entry name" value="Fascin"/>
    <property type="match status" value="1"/>
</dbReference>
<dbReference type="FunFam" id="2.80.10.50:FF:000015">
    <property type="entry name" value="Fascin"/>
    <property type="match status" value="1"/>
</dbReference>
<dbReference type="Gene3D" id="2.80.10.50">
    <property type="match status" value="4"/>
</dbReference>
<dbReference type="InterPro" id="IPR008999">
    <property type="entry name" value="Actin-crosslinking"/>
</dbReference>
<dbReference type="InterPro" id="IPR010431">
    <property type="entry name" value="Fascin"/>
</dbReference>
<dbReference type="InterPro" id="IPR022768">
    <property type="entry name" value="Fascin-like_dom"/>
</dbReference>
<dbReference type="InterPro" id="IPR024703">
    <property type="entry name" value="Fascin_metazoans"/>
</dbReference>
<dbReference type="PANTHER" id="PTHR10551">
    <property type="entry name" value="FASCIN"/>
    <property type="match status" value="1"/>
</dbReference>
<dbReference type="PANTHER" id="PTHR10551:SF9">
    <property type="entry name" value="FASCIN-2"/>
    <property type="match status" value="1"/>
</dbReference>
<dbReference type="Pfam" id="PF06268">
    <property type="entry name" value="Fascin"/>
    <property type="match status" value="4"/>
</dbReference>
<dbReference type="PIRSF" id="PIRSF005682">
    <property type="entry name" value="Fascin"/>
    <property type="match status" value="1"/>
</dbReference>
<dbReference type="SUPFAM" id="SSF50405">
    <property type="entry name" value="Actin-crosslinking proteins"/>
    <property type="match status" value="4"/>
</dbReference>